<comment type="function">
    <text evidence="1">One of shell proteins of the carboxysome, a polyhedral inclusion where RuBisCO (ribulose bisphosphate carboxylase, ccbL-ccbS) is sequestered. Assembles into hexamers which make sheets that form the facets of the polyhedral carboxysome.</text>
</comment>
<comment type="subunit">
    <text evidence="1">Homohexamer with a small central pore. Forms a CsoS2-CsoS1-RuBisCO complex.</text>
</comment>
<comment type="subcellular location">
    <subcellularLocation>
        <location evidence="1">Carboxysome</location>
    </subcellularLocation>
    <text evidence="5">This bacterium makes alpha-type carboxysomes.</text>
</comment>
<comment type="induction">
    <text evidence="3">Transcribed during light cycle, reaching a peak after 6 hours of illumination, mRNA becomes undetectable during the dark. Part of the csoS1-ccbL-ccbS operon.</text>
</comment>
<comment type="domain">
    <text evidence="1">The tight homohexamer forms a small pore which is positively charged.</text>
</comment>
<comment type="similarity">
    <text evidence="5">Belongs to the bacterial microcompartments protein family. CsoS1 subfamily.</text>
</comment>
<keyword id="KW-1283">Bacterial microcompartment</keyword>
<keyword id="KW-0120">Carbon dioxide fixation</keyword>
<keyword id="KW-1282">Carboxysome</keyword>
<keyword id="KW-0602">Photosynthesis</keyword>
<keyword id="KW-1185">Reference proteome</keyword>
<sequence length="103" mass="10584">MANETMGIALGMIETRGLVPAIEAADAMTKAAEVRLIGREFVGGGYVTVLVRGETGAVNAAVRAGADACERVGDGLVAAHIIARPHREVEPALGNGNFLGQKD</sequence>
<name>CSOS1_SYNPW</name>
<evidence type="ECO:0000250" key="1">
    <source>
        <dbReference type="UniProtKB" id="P45689"/>
    </source>
</evidence>
<evidence type="ECO:0000255" key="2">
    <source>
        <dbReference type="PROSITE-ProRule" id="PRU01278"/>
    </source>
</evidence>
<evidence type="ECO:0000269" key="3">
    <source>
    </source>
</evidence>
<evidence type="ECO:0000303" key="4">
    <source>
    </source>
</evidence>
<evidence type="ECO:0000305" key="5"/>
<reference key="1">
    <citation type="journal article" date="1996" name="Plant Mol. Biol.">
        <title>Regulation, unique gene organization, and unusual primary structure of carbon fixation genes from a marine phycoerythrin-containing cyanobacterium.</title>
        <authorList>
            <person name="Watson G.M."/>
            <person name="Tabita F.R."/>
        </authorList>
    </citation>
    <scope>NUCLEOTIDE SEQUENCE [GENOMIC DNA]</scope>
    <scope>INDUCTION</scope>
    <scope>OPERON STRUCTURE</scope>
    <source>
        <strain>WH7803</strain>
    </source>
</reference>
<reference key="2">
    <citation type="submission" date="2006-05" db="EMBL/GenBank/DDBJ databases">
        <authorList>
            <consortium name="Genoscope"/>
        </authorList>
    </citation>
    <scope>NUCLEOTIDE SEQUENCE [LARGE SCALE GENOMIC DNA]</scope>
    <source>
        <strain>WH7803</strain>
    </source>
</reference>
<organism>
    <name type="scientific">Synechococcus sp. (strain WH7803)</name>
    <dbReference type="NCBI Taxonomy" id="32051"/>
    <lineage>
        <taxon>Bacteria</taxon>
        <taxon>Bacillati</taxon>
        <taxon>Cyanobacteriota</taxon>
        <taxon>Cyanophyceae</taxon>
        <taxon>Synechococcales</taxon>
        <taxon>Synechococcaceae</taxon>
        <taxon>Synechococcus</taxon>
    </lineage>
</organism>
<protein>
    <recommendedName>
        <fullName evidence="5">Carboxysome shell protein CsoS1</fullName>
    </recommendedName>
</protein>
<gene>
    <name type="primary">csoS1</name>
    <name evidence="4" type="synonym">ccmK</name>
    <name type="ordered locus">SynWH7803_0677</name>
</gene>
<proteinExistence type="evidence at transcript level"/>
<feature type="chain" id="PRO_0000201505" description="Carboxysome shell protein CsoS1">
    <location>
        <begin position="1"/>
        <end position="103"/>
    </location>
</feature>
<feature type="domain" description="BMC" evidence="2">
    <location>
        <begin position="9"/>
        <end position="94"/>
    </location>
</feature>
<accession>P0A330</accession>
<accession>A5GJI8</accession>
<accession>P96485</accession>
<dbReference type="EMBL" id="U46156">
    <property type="protein sequence ID" value="AAB48079.1"/>
    <property type="molecule type" value="Genomic_DNA"/>
</dbReference>
<dbReference type="EMBL" id="CT971583">
    <property type="protein sequence ID" value="CAK23103.1"/>
    <property type="molecule type" value="Genomic_DNA"/>
</dbReference>
<dbReference type="SMR" id="P0A330"/>
<dbReference type="STRING" id="32051.SynWH7803_0677"/>
<dbReference type="KEGG" id="syx:SynWH7803_0677"/>
<dbReference type="eggNOG" id="COG4577">
    <property type="taxonomic scope" value="Bacteria"/>
</dbReference>
<dbReference type="HOGENOM" id="CLU_064903_5_3_3"/>
<dbReference type="OrthoDB" id="5296101at2"/>
<dbReference type="Proteomes" id="UP000001566">
    <property type="component" value="Chromosome"/>
</dbReference>
<dbReference type="GO" id="GO:0031470">
    <property type="term" value="C:carboxysome"/>
    <property type="evidence" value="ECO:0007669"/>
    <property type="project" value="UniProtKB-SubCell"/>
</dbReference>
<dbReference type="GO" id="GO:0043886">
    <property type="term" value="F:structural constituent of carboxysome shell"/>
    <property type="evidence" value="ECO:0007669"/>
    <property type="project" value="UniProtKB-ARBA"/>
</dbReference>
<dbReference type="GO" id="GO:0015977">
    <property type="term" value="P:carbon fixation"/>
    <property type="evidence" value="ECO:0007669"/>
    <property type="project" value="UniProtKB-KW"/>
</dbReference>
<dbReference type="GO" id="GO:0015979">
    <property type="term" value="P:photosynthesis"/>
    <property type="evidence" value="ECO:0007669"/>
    <property type="project" value="UniProtKB-KW"/>
</dbReference>
<dbReference type="CDD" id="cd07058">
    <property type="entry name" value="BMC_CsoS1"/>
    <property type="match status" value="1"/>
</dbReference>
<dbReference type="Gene3D" id="3.30.70.1710">
    <property type="match status" value="1"/>
</dbReference>
<dbReference type="InterPro" id="IPR020808">
    <property type="entry name" value="Bact_microcomp_CS"/>
</dbReference>
<dbReference type="InterPro" id="IPR000249">
    <property type="entry name" value="BMC_dom"/>
</dbReference>
<dbReference type="InterPro" id="IPR050575">
    <property type="entry name" value="BMC_shell"/>
</dbReference>
<dbReference type="InterPro" id="IPR037233">
    <property type="entry name" value="CcmK-like_sf"/>
</dbReference>
<dbReference type="InterPro" id="IPR044872">
    <property type="entry name" value="CcmK/CsoS1_BMC"/>
</dbReference>
<dbReference type="PANTHER" id="PTHR33941:SF11">
    <property type="entry name" value="BACTERIAL MICROCOMPARTMENT SHELL PROTEIN PDUJ"/>
    <property type="match status" value="1"/>
</dbReference>
<dbReference type="PANTHER" id="PTHR33941">
    <property type="entry name" value="PROPANEDIOL UTILIZATION PROTEIN PDUA"/>
    <property type="match status" value="1"/>
</dbReference>
<dbReference type="Pfam" id="PF00936">
    <property type="entry name" value="BMC"/>
    <property type="match status" value="1"/>
</dbReference>
<dbReference type="SMART" id="SM00877">
    <property type="entry name" value="BMC"/>
    <property type="match status" value="1"/>
</dbReference>
<dbReference type="SUPFAM" id="SSF143414">
    <property type="entry name" value="CcmK-like"/>
    <property type="match status" value="1"/>
</dbReference>
<dbReference type="PROSITE" id="PS01139">
    <property type="entry name" value="BMC_1"/>
    <property type="match status" value="1"/>
</dbReference>
<dbReference type="PROSITE" id="PS51930">
    <property type="entry name" value="BMC_2"/>
    <property type="match status" value="1"/>
</dbReference>